<keyword id="KW-0973">c-di-GMP</keyword>
<keyword id="KW-0997">Cell inner membrane</keyword>
<keyword id="KW-1003">Cell membrane</keyword>
<keyword id="KW-0135">Cellulose biosynthesis</keyword>
<keyword id="KW-0472">Membrane</keyword>
<keyword id="KW-0732">Signal</keyword>
<keyword id="KW-0812">Transmembrane</keyword>
<keyword id="KW-1133">Transmembrane helix</keyword>
<sequence>MKMVSLIALLVFATGAQAAPIASKAPAHQPTGSDLPPLPAAAPVAPAAQPSAQAVDPASAAPASDAGSASNADAILDNAENAAGVGTDVATVHTYSLQELGAQSALTMRGAAPLQGLQFGIPADQLVTSARLVVSGAMSPNLQPDNSAVTITLNEQYIGTLRPDPTHPAFGPLSFDINPIFFVSGNRLNFNFASGSKGCADPTNGLQWASVSEHSQLQITTIPLPPRRQLARLPQPFFDKTVRQKVVIPFVLAQTFDPEVLKASGIIASWFGQQTDFRGVNFPVFSTIPQTGNAIVVGVADELPAALGRPSVSGPTLMEVANPSDPNGTVLLVTGRDRDEVITASKGIGFGSSALPVASRMDVAPIDVAPRLANDAPSFIPTSRPVRLGELVPVSALQGEGYTPGVLSVPFRVSPDLYTWRDRPYKLNVRFRAPDGPILDVARSHLDVGINNTYLQSYSLREQSSVVDQLLRRVGVGTQNAGVEQHTLTIPPWMVFGQDQLQFYFDAAPLAQPGCRPGPSLIHMSVDPDSTIDLSNAYHITRMPNLAYMASAGYPFTTYADLSRSAVVLPDHPNGTVVSAYLDLMGFMGATTWYPVSGVDIVSADHVSDVADRNLIVLSTLSNSADVSALLANSAYQISDGRLHMGLRSTLSGVWNIFQDPMSVMSNTHPTEVETTLSGGVGAMVEAESPLASGRTVLALLSGDGQGLDNLVQILGQRKNQAKVQGDLVLAHGDDLTSYRSSPLYTVGTVPLWLIPDWYMHNHPFRVIVVGLVGCLLVVAVLVRALFRHAMFRRRQLQEERQKS</sequence>
<reference key="1">
    <citation type="journal article" date="1999" name="DNA Res.">
        <title>Cloning of cellulose synthase genes from Acetobacter xylinum JCM 7664: implication of a novel set of cellulose synthase genes.</title>
        <authorList>
            <person name="Umeda Y."/>
            <person name="Hirano A."/>
            <person name="Ishibashi M."/>
            <person name="Akiyama H."/>
            <person name="Onizuka T."/>
            <person name="Ikeuchi M."/>
            <person name="Inoue Y."/>
        </authorList>
    </citation>
    <scope>NUCLEOTIDE SEQUENCE [GENOMIC DNA]</scope>
    <source>
        <strain>JCM 7664 / NBRC 13693</strain>
    </source>
</reference>
<comment type="function">
    <text evidence="1">Binds the cellulose synthase activator, bis-(3'-5') cyclic diguanylic acid (c-di-GMP).</text>
</comment>
<comment type="pathway">
    <text>Glycan metabolism; bacterial cellulose biosynthesis.</text>
</comment>
<comment type="subunit">
    <text evidence="1">Tightly associated with the cellulose synthase catalytic subunit.</text>
</comment>
<comment type="subcellular location">
    <subcellularLocation>
        <location evidence="1">Cell inner membrane</location>
        <topology evidence="1">Single-pass type I membrane protein</topology>
    </subcellularLocation>
</comment>
<comment type="similarity">
    <text evidence="4">Belongs to the AcsB/BcsB family.</text>
</comment>
<feature type="signal peptide" evidence="2">
    <location>
        <begin position="1"/>
        <end position="18"/>
    </location>
</feature>
<feature type="chain" id="PRO_0000000267" description="Cyclic di-GMP-binding protein">
    <location>
        <begin position="19"/>
        <end position="804"/>
    </location>
</feature>
<feature type="topological domain" description="Periplasmic" evidence="2">
    <location>
        <begin position="19"/>
        <end position="766"/>
    </location>
</feature>
<feature type="transmembrane region" description="Helical" evidence="2">
    <location>
        <begin position="767"/>
        <end position="787"/>
    </location>
</feature>
<feature type="topological domain" description="Cytoplasmic" evidence="2">
    <location>
        <begin position="788"/>
        <end position="804"/>
    </location>
</feature>
<feature type="region of interest" description="Disordered" evidence="3">
    <location>
        <begin position="24"/>
        <end position="69"/>
    </location>
</feature>
<proteinExistence type="inferred from homology"/>
<evidence type="ECO:0000250" key="1"/>
<evidence type="ECO:0000255" key="2"/>
<evidence type="ECO:0000256" key="3">
    <source>
        <dbReference type="SAM" id="MobiDB-lite"/>
    </source>
</evidence>
<evidence type="ECO:0000305" key="4"/>
<accession>Q9WX62</accession>
<dbReference type="EMBL" id="AB015802">
    <property type="protein sequence ID" value="BAA77586.1"/>
    <property type="molecule type" value="Genomic_DNA"/>
</dbReference>
<dbReference type="SMR" id="Q9WX62"/>
<dbReference type="UniPathway" id="UPA00694"/>
<dbReference type="GO" id="GO:0005886">
    <property type="term" value="C:plasma membrane"/>
    <property type="evidence" value="ECO:0007669"/>
    <property type="project" value="UniProtKB-SubCell"/>
</dbReference>
<dbReference type="GO" id="GO:0030244">
    <property type="term" value="P:cellulose biosynthetic process"/>
    <property type="evidence" value="ECO:0007669"/>
    <property type="project" value="UniProtKB-KW"/>
</dbReference>
<dbReference type="GO" id="GO:0006011">
    <property type="term" value="P:UDP-alpha-D-glucose metabolic process"/>
    <property type="evidence" value="ECO:0007669"/>
    <property type="project" value="InterPro"/>
</dbReference>
<dbReference type="Gene3D" id="2.60.120.260">
    <property type="entry name" value="Galactose-binding domain-like"/>
    <property type="match status" value="2"/>
</dbReference>
<dbReference type="InterPro" id="IPR003920">
    <property type="entry name" value="Cell_synth_B"/>
</dbReference>
<dbReference type="InterPro" id="IPR018513">
    <property type="entry name" value="Cell_synthase_bac"/>
</dbReference>
<dbReference type="PANTHER" id="PTHR39083">
    <property type="entry name" value="CYCLIC DI-GMP-BINDING PROTEIN"/>
    <property type="match status" value="1"/>
</dbReference>
<dbReference type="PANTHER" id="PTHR39083:SF1">
    <property type="entry name" value="CYCLIC DI-GMP-BINDING PROTEIN"/>
    <property type="match status" value="1"/>
</dbReference>
<dbReference type="Pfam" id="PF03170">
    <property type="entry name" value="BcsB"/>
    <property type="match status" value="1"/>
</dbReference>
<dbReference type="PRINTS" id="PR01440">
    <property type="entry name" value="CELLSNTHASEB"/>
</dbReference>
<protein>
    <recommendedName>
        <fullName>Cyclic di-GMP-binding protein</fullName>
    </recommendedName>
    <alternativeName>
        <fullName>CDGBP</fullName>
    </alternativeName>
    <alternativeName>
        <fullName>Cellulose synthase regulatory subunit</fullName>
        <shortName>Cellulose synthase protein B</shortName>
    </alternativeName>
</protein>
<name>BCSB3_KOMXY</name>
<organism>
    <name type="scientific">Komagataeibacter xylinus</name>
    <name type="common">Gluconacetobacter xylinus</name>
    <dbReference type="NCBI Taxonomy" id="28448"/>
    <lineage>
        <taxon>Bacteria</taxon>
        <taxon>Pseudomonadati</taxon>
        <taxon>Pseudomonadota</taxon>
        <taxon>Alphaproteobacteria</taxon>
        <taxon>Acetobacterales</taxon>
        <taxon>Acetobacteraceae</taxon>
        <taxon>Komagataeibacter</taxon>
    </lineage>
</organism>
<gene>
    <name type="primary">bcsBI</name>
</gene>